<dbReference type="EC" id="3.6.1.-" evidence="1 2"/>
<dbReference type="EMBL" id="M96791">
    <property type="protein sequence ID" value="AAA23829.1"/>
    <property type="status" value="ALT_INIT"/>
    <property type="molecule type" value="Genomic_DNA"/>
</dbReference>
<dbReference type="EMBL" id="U00096">
    <property type="protein sequence ID" value="AAC74171.2"/>
    <property type="molecule type" value="Genomic_DNA"/>
</dbReference>
<dbReference type="EMBL" id="AP009048">
    <property type="protein sequence ID" value="BAA35895.2"/>
    <property type="molecule type" value="Genomic_DNA"/>
</dbReference>
<dbReference type="PIR" id="D64852">
    <property type="entry name" value="D64852"/>
</dbReference>
<dbReference type="RefSeq" id="NP_415605.2">
    <property type="nucleotide sequence ID" value="NC_000913.3"/>
</dbReference>
<dbReference type="RefSeq" id="WP_001125202.1">
    <property type="nucleotide sequence ID" value="NZ_SSZK01000019.1"/>
</dbReference>
<dbReference type="PDB" id="4JHC">
    <property type="method" value="X-ray"/>
    <property type="resolution" value="1.85 A"/>
    <property type="chains" value="A/B=1-194"/>
</dbReference>
<dbReference type="PDBsum" id="4JHC"/>
<dbReference type="SMR" id="P0A729"/>
<dbReference type="BioGRID" id="4261026">
    <property type="interactions" value="146"/>
</dbReference>
<dbReference type="DIP" id="DIP-48156N"/>
<dbReference type="FunCoup" id="P0A729">
    <property type="interactions" value="233"/>
</dbReference>
<dbReference type="STRING" id="511145.b1087"/>
<dbReference type="jPOST" id="P0A729"/>
<dbReference type="PaxDb" id="511145-b1087"/>
<dbReference type="EnsemblBacteria" id="AAC74171">
    <property type="protein sequence ID" value="AAC74171"/>
    <property type="gene ID" value="b1087"/>
</dbReference>
<dbReference type="GeneID" id="75203673"/>
<dbReference type="GeneID" id="945631"/>
<dbReference type="KEGG" id="ecj:JW5155"/>
<dbReference type="KEGG" id="eco:b1087"/>
<dbReference type="KEGG" id="ecoc:C3026_06580"/>
<dbReference type="PATRIC" id="fig|511145.12.peg.1130"/>
<dbReference type="EchoBASE" id="EB1408"/>
<dbReference type="eggNOG" id="COG0424">
    <property type="taxonomic scope" value="Bacteria"/>
</dbReference>
<dbReference type="HOGENOM" id="CLU_040416_1_0_6"/>
<dbReference type="InParanoid" id="P0A729"/>
<dbReference type="OMA" id="FYCAGSF"/>
<dbReference type="OrthoDB" id="9813694at2"/>
<dbReference type="PhylomeDB" id="P0A729"/>
<dbReference type="BioCyc" id="EcoCyc:EG11438-MONOMER"/>
<dbReference type="BioCyc" id="MetaCyc:EG11438-MONOMER"/>
<dbReference type="EvolutionaryTrace" id="P0A729"/>
<dbReference type="PRO" id="PR:P0A729"/>
<dbReference type="Proteomes" id="UP000000625">
    <property type="component" value="Chromosome"/>
</dbReference>
<dbReference type="GO" id="GO:0005737">
    <property type="term" value="C:cytoplasm"/>
    <property type="evidence" value="ECO:0007669"/>
    <property type="project" value="UniProtKB-SubCell"/>
</dbReference>
<dbReference type="GO" id="GO:0047429">
    <property type="term" value="F:nucleoside triphosphate diphosphatase activity"/>
    <property type="evidence" value="ECO:0000314"/>
    <property type="project" value="EcoCyc"/>
</dbReference>
<dbReference type="GO" id="GO:0009117">
    <property type="term" value="P:nucleotide metabolic process"/>
    <property type="evidence" value="ECO:0007669"/>
    <property type="project" value="UniProtKB-KW"/>
</dbReference>
<dbReference type="CDD" id="cd00555">
    <property type="entry name" value="Maf"/>
    <property type="match status" value="1"/>
</dbReference>
<dbReference type="FunFam" id="3.90.950.10:FF:000005">
    <property type="entry name" value="7-methyl-GTP pyrophosphatase"/>
    <property type="match status" value="1"/>
</dbReference>
<dbReference type="Gene3D" id="3.90.950.10">
    <property type="match status" value="1"/>
</dbReference>
<dbReference type="HAMAP" id="MF_00528">
    <property type="entry name" value="Maf"/>
    <property type="match status" value="1"/>
</dbReference>
<dbReference type="InterPro" id="IPR029001">
    <property type="entry name" value="ITPase-like_fam"/>
</dbReference>
<dbReference type="InterPro" id="IPR003697">
    <property type="entry name" value="Maf-like"/>
</dbReference>
<dbReference type="NCBIfam" id="TIGR00172">
    <property type="entry name" value="maf"/>
    <property type="match status" value="1"/>
</dbReference>
<dbReference type="PANTHER" id="PTHR43213:SF10">
    <property type="entry name" value="7-METHYL-GTP PYROPHOSPHATASE"/>
    <property type="match status" value="1"/>
</dbReference>
<dbReference type="PANTHER" id="PTHR43213">
    <property type="entry name" value="BIFUNCTIONAL DTTP/UTP PYROPHOSPHATASE/METHYLTRANSFERASE PROTEIN-RELATED"/>
    <property type="match status" value="1"/>
</dbReference>
<dbReference type="Pfam" id="PF02545">
    <property type="entry name" value="Maf"/>
    <property type="match status" value="1"/>
</dbReference>
<dbReference type="PIRSF" id="PIRSF006305">
    <property type="entry name" value="Maf"/>
    <property type="match status" value="1"/>
</dbReference>
<dbReference type="SUPFAM" id="SSF52972">
    <property type="entry name" value="ITPase-like"/>
    <property type="match status" value="1"/>
</dbReference>
<comment type="function">
    <text evidence="2">Nucleoside triphosphate pyrophosphatase that hydrolyzes 7-methyl-GTP (m(7)GTP) (PubMed:24210219). May have a dual role in cell division arrest and in preventing the incorporation of modified nucleotides into cellular nucleic acids (PubMed:24210219).</text>
</comment>
<comment type="catalytic activity">
    <reaction evidence="1 2">
        <text>N(7)-methyl-GTP + H2O = N(7)-methyl-GMP + diphosphate + H(+)</text>
        <dbReference type="Rhea" id="RHEA:58744"/>
        <dbReference type="ChEBI" id="CHEBI:15377"/>
        <dbReference type="ChEBI" id="CHEBI:15378"/>
        <dbReference type="ChEBI" id="CHEBI:33019"/>
        <dbReference type="ChEBI" id="CHEBI:58285"/>
        <dbReference type="ChEBI" id="CHEBI:87133"/>
    </reaction>
</comment>
<comment type="cofactor">
    <cofactor evidence="1">
        <name>a divalent metal cation</name>
        <dbReference type="ChEBI" id="CHEBI:60240"/>
    </cofactor>
</comment>
<comment type="biophysicochemical properties">
    <kinetics>
        <KM evidence="2">32.8 uM for m(7)GTP</KM>
        <text evidence="2">kcat is 1.2 sec(-1).</text>
    </kinetics>
</comment>
<comment type="subunit">
    <text evidence="2">Monomer and homodimer.</text>
</comment>
<comment type="subcellular location">
    <subcellularLocation>
        <location evidence="1 3">Cytoplasm</location>
    </subcellularLocation>
</comment>
<comment type="similarity">
    <text evidence="1 4">Belongs to the Maf family. YceF subfamily.</text>
</comment>
<comment type="sequence caution" evidence="3">
    <conflict type="erroneous initiation">
        <sequence resource="EMBL-CDS" id="AAA23829"/>
    </conflict>
    <text>Extended N-terminus.</text>
</comment>
<name>NTPPB_ECOLI</name>
<accession>P0A729</accession>
<accession>P27244</accession>
<protein>
    <recommendedName>
        <fullName evidence="1 3">7-methyl-GTP pyrophosphatase</fullName>
        <shortName evidence="1 3">m(7)GTP pyrophosphatase</shortName>
        <ecNumber evidence="1 2">3.6.1.-</ecNumber>
    </recommendedName>
</protein>
<reference key="1">
    <citation type="journal article" date="1992" name="J. Bacteriol.">
        <title>Physical locations of genes in the rne (ams)-rpmF-plsX-fab region of the Escherichia coli K-12 chromosome.</title>
        <authorList>
            <person name="Oh W."/>
            <person name="Larson T.J."/>
        </authorList>
    </citation>
    <scope>NUCLEOTIDE SEQUENCE [GENOMIC DNA]</scope>
    <source>
        <strain>K12</strain>
    </source>
</reference>
<reference key="2">
    <citation type="journal article" date="1996" name="DNA Res.">
        <title>A 718-kb DNA sequence of the Escherichia coli K-12 genome corresponding to the 12.7-28.0 min region on the linkage map.</title>
        <authorList>
            <person name="Oshima T."/>
            <person name="Aiba H."/>
            <person name="Baba T."/>
            <person name="Fujita K."/>
            <person name="Hayashi K."/>
            <person name="Honjo A."/>
            <person name="Ikemoto K."/>
            <person name="Inada T."/>
            <person name="Itoh T."/>
            <person name="Kajihara M."/>
            <person name="Kanai K."/>
            <person name="Kashimoto K."/>
            <person name="Kimura S."/>
            <person name="Kitagawa M."/>
            <person name="Makino K."/>
            <person name="Masuda S."/>
            <person name="Miki T."/>
            <person name="Mizobuchi K."/>
            <person name="Mori H."/>
            <person name="Motomura K."/>
            <person name="Nakamura Y."/>
            <person name="Nashimoto H."/>
            <person name="Nishio Y."/>
            <person name="Saito N."/>
            <person name="Sampei G."/>
            <person name="Seki Y."/>
            <person name="Tagami H."/>
            <person name="Takemoto K."/>
            <person name="Wada C."/>
            <person name="Yamamoto Y."/>
            <person name="Yano M."/>
            <person name="Horiuchi T."/>
        </authorList>
    </citation>
    <scope>NUCLEOTIDE SEQUENCE [LARGE SCALE GENOMIC DNA]</scope>
    <source>
        <strain>K12 / W3110 / ATCC 27325 / DSM 5911</strain>
    </source>
</reference>
<reference key="3">
    <citation type="journal article" date="1997" name="Science">
        <title>The complete genome sequence of Escherichia coli K-12.</title>
        <authorList>
            <person name="Blattner F.R."/>
            <person name="Plunkett G. III"/>
            <person name="Bloch C.A."/>
            <person name="Perna N.T."/>
            <person name="Burland V."/>
            <person name="Riley M."/>
            <person name="Collado-Vides J."/>
            <person name="Glasner J.D."/>
            <person name="Rode C.K."/>
            <person name="Mayhew G.F."/>
            <person name="Gregor J."/>
            <person name="Davis N.W."/>
            <person name="Kirkpatrick H.A."/>
            <person name="Goeden M.A."/>
            <person name="Rose D.J."/>
            <person name="Mau B."/>
            <person name="Shao Y."/>
        </authorList>
    </citation>
    <scope>NUCLEOTIDE SEQUENCE [LARGE SCALE GENOMIC DNA]</scope>
    <source>
        <strain>K12 / MG1655 / ATCC 47076</strain>
    </source>
</reference>
<reference key="4">
    <citation type="journal article" date="2006" name="Mol. Syst. Biol.">
        <title>Highly accurate genome sequences of Escherichia coli K-12 strains MG1655 and W3110.</title>
        <authorList>
            <person name="Hayashi K."/>
            <person name="Morooka N."/>
            <person name="Yamamoto Y."/>
            <person name="Fujita K."/>
            <person name="Isono K."/>
            <person name="Choi S."/>
            <person name="Ohtsubo E."/>
            <person name="Baba T."/>
            <person name="Wanner B.L."/>
            <person name="Mori H."/>
            <person name="Horiuchi T."/>
        </authorList>
    </citation>
    <scope>NUCLEOTIDE SEQUENCE [LARGE SCALE GENOMIC DNA]</scope>
    <source>
        <strain>K12 / W3110 / ATCC 27325 / DSM 5911</strain>
    </source>
</reference>
<reference evidence="5" key="5">
    <citation type="journal article" date="2013" name="Chem. Biol.">
        <title>Biochemical and structural studies of conserved Maf proteins revealed nucleotide pyrophosphatases with a preference for modified nucleotides.</title>
        <authorList>
            <person name="Tchigvintsev A."/>
            <person name="Tchigvintsev D."/>
            <person name="Flick R."/>
            <person name="Popovic A."/>
            <person name="Dong A."/>
            <person name="Xu X."/>
            <person name="Brown G."/>
            <person name="Lu W."/>
            <person name="Wu H."/>
            <person name="Cui H."/>
            <person name="Dombrowski L."/>
            <person name="Joo J.C."/>
            <person name="Beloglazova N."/>
            <person name="Min J."/>
            <person name="Savchenko A."/>
            <person name="Caudy A.A."/>
            <person name="Rabinowitz J.D."/>
            <person name="Murzin A.G."/>
            <person name="Yakunin A.F."/>
        </authorList>
    </citation>
    <scope>X-RAY CRYSTALLOGRAPHY (1.85 ANGSTROMS)</scope>
    <scope>FUNCTION</scope>
    <scope>CATALYTIC ACTIVITY</scope>
    <scope>BIOPHYSICOCHEMICAL PROPERTIES</scope>
    <scope>SUBUNIT</scope>
    <scope>ACTIVE SITE</scope>
    <scope>MUTAGENESIS OF TRP-12; ARG-13; LYS-52; ASP-69; GLN-70; LYS-81 AND GLU-154</scope>
</reference>
<gene>
    <name type="primary">yceF</name>
    <name type="ordered locus">b1087</name>
    <name type="ordered locus">JW5155</name>
</gene>
<proteinExistence type="evidence at protein level"/>
<evidence type="ECO:0000255" key="1">
    <source>
        <dbReference type="HAMAP-Rule" id="MF_00528"/>
    </source>
</evidence>
<evidence type="ECO:0000269" key="2">
    <source>
    </source>
</evidence>
<evidence type="ECO:0000305" key="3"/>
<evidence type="ECO:0000305" key="4">
    <source>
    </source>
</evidence>
<evidence type="ECO:0007744" key="5">
    <source>
        <dbReference type="PDB" id="4JHC"/>
    </source>
</evidence>
<evidence type="ECO:0007829" key="6">
    <source>
        <dbReference type="PDB" id="4JHC"/>
    </source>
</evidence>
<organism>
    <name type="scientific">Escherichia coli (strain K12)</name>
    <dbReference type="NCBI Taxonomy" id="83333"/>
    <lineage>
        <taxon>Bacteria</taxon>
        <taxon>Pseudomonadati</taxon>
        <taxon>Pseudomonadota</taxon>
        <taxon>Gammaproteobacteria</taxon>
        <taxon>Enterobacterales</taxon>
        <taxon>Enterobacteriaceae</taxon>
        <taxon>Escherichia</taxon>
    </lineage>
</organism>
<feature type="chain" id="PRO_0000122975" description="7-methyl-GTP pyrophosphatase">
    <location>
        <begin position="1"/>
        <end position="194"/>
    </location>
</feature>
<feature type="active site" description="Proton acceptor" evidence="1 4">
    <location>
        <position position="69"/>
    </location>
</feature>
<feature type="site" description="Important for substrate specificity" evidence="1 4">
    <location>
        <position position="12"/>
    </location>
</feature>
<feature type="site" description="Important for substrate specificity" evidence="1 4">
    <location>
        <position position="70"/>
    </location>
</feature>
<feature type="site" description="Important for substrate specificity" evidence="1 4">
    <location>
        <position position="154"/>
    </location>
</feature>
<feature type="mutagenesis site" description="No change in activity." evidence="2">
    <original>W</original>
    <variation>A</variation>
    <location>
        <position position="12"/>
    </location>
</feature>
<feature type="mutagenesis site" description="Decrease in activity." evidence="2">
    <original>W</original>
    <variation>R</variation>
    <location>
        <position position="12"/>
    </location>
</feature>
<feature type="mutagenesis site" description="Loss of activity." evidence="2">
    <original>R</original>
    <variation>A</variation>
    <location>
        <position position="13"/>
    </location>
</feature>
<feature type="mutagenesis site" description="Loss of activity." evidence="2">
    <original>K</original>
    <variation>A</variation>
    <location>
        <position position="52"/>
    </location>
</feature>
<feature type="mutagenesis site" description="Loss of activity." evidence="2">
    <original>D</original>
    <variation>A</variation>
    <location>
        <position position="69"/>
    </location>
</feature>
<feature type="mutagenesis site" description="No change in activity." evidence="2">
    <original>Q</original>
    <variation>A</variation>
    <variation>T</variation>
    <location>
        <position position="70"/>
    </location>
</feature>
<feature type="mutagenesis site" description="Strong decrease in activity." evidence="2">
    <original>K</original>
    <variation>A</variation>
    <location>
        <position position="81"/>
    </location>
</feature>
<feature type="mutagenesis site" description="Decrease in activity." evidence="2">
    <original>E</original>
    <variation>A</variation>
    <variation>Q</variation>
    <location>
        <position position="154"/>
    </location>
</feature>
<feature type="strand" evidence="6">
    <location>
        <begin position="4"/>
        <end position="7"/>
    </location>
</feature>
<feature type="helix" evidence="6">
    <location>
        <begin position="11"/>
        <end position="17"/>
    </location>
</feature>
<feature type="helix" evidence="6">
    <location>
        <begin position="18"/>
        <end position="20"/>
    </location>
</feature>
<feature type="strand" evidence="6">
    <location>
        <begin position="24"/>
        <end position="27"/>
    </location>
</feature>
<feature type="helix" evidence="6">
    <location>
        <begin position="41"/>
        <end position="54"/>
    </location>
</feature>
<feature type="turn" evidence="6">
    <location>
        <begin position="55"/>
        <end position="59"/>
    </location>
</feature>
<feature type="strand" evidence="6">
    <location>
        <begin position="63"/>
        <end position="74"/>
    </location>
</feature>
<feature type="strand" evidence="6">
    <location>
        <begin position="77"/>
        <end position="79"/>
    </location>
</feature>
<feature type="helix" evidence="6">
    <location>
        <begin position="85"/>
        <end position="95"/>
    </location>
</feature>
<feature type="strand" evidence="6">
    <location>
        <begin position="98"/>
        <end position="110"/>
    </location>
</feature>
<feature type="turn" evidence="6">
    <location>
        <begin position="111"/>
        <end position="113"/>
    </location>
</feature>
<feature type="strand" evidence="6">
    <location>
        <begin position="116"/>
        <end position="127"/>
    </location>
</feature>
<feature type="helix" evidence="6">
    <location>
        <begin position="132"/>
        <end position="142"/>
    </location>
</feature>
<feature type="turn" evidence="6">
    <location>
        <begin position="153"/>
        <end position="155"/>
    </location>
</feature>
<feature type="helix" evidence="6">
    <location>
        <begin position="156"/>
        <end position="160"/>
    </location>
</feature>
<feature type="strand" evidence="6">
    <location>
        <begin position="161"/>
        <end position="167"/>
    </location>
</feature>
<feature type="helix" evidence="6">
    <location>
        <begin position="169"/>
        <end position="173"/>
    </location>
</feature>
<feature type="helix" evidence="6">
    <location>
        <begin position="177"/>
        <end position="186"/>
    </location>
</feature>
<sequence length="194" mass="21691">MPKLILASTSPWRRALLEKLQISFECAAPEVDETPRSDESPRQLVLRLAQEKAQSLASRYPDHLIIGSDQVCVLDGEITGKPLTEENARLQLRKASGNIVTFYTGLALFNSANGHLQTEVEPFDVHFRHLSEAEIDNYVRKEHPLHCAGSFKSEGFGITLFERLEGRDPNTLVGLPLIALCQMLRREGKNPLMG</sequence>
<keyword id="KW-0002">3D-structure</keyword>
<keyword id="KW-0963">Cytoplasm</keyword>
<keyword id="KW-0378">Hydrolase</keyword>
<keyword id="KW-0546">Nucleotide metabolism</keyword>
<keyword id="KW-1185">Reference proteome</keyword>